<accession>P52695</accession>
<accession>Q9JMP9</accession>
<comment type="function">
    <text>Up-regulates the expression of the hemolysin gene, hlyA, and may promote expression of other virulence determinants in vivo. It may have both positive and negative regulator activities.</text>
</comment>
<comment type="caution">
    <text evidence="2">It is uncertain whether Met-1 or Met-9 is the initiator.</text>
</comment>
<sequence>MPYLKGAPMNLQEMEKNSAKAVVLLKAMANERRLQILCMLLDNELSVGELSSRLELSQSALSQHLAWLRRDGLVNTRKEAQTVFYTLSSTEVKAMIELLHRLYCQANQ</sequence>
<gene>
    <name type="primary">hlyU</name>
    <name type="ordered locus">VC_0678</name>
</gene>
<feature type="chain" id="PRO_0000160622" description="Transcriptional activator HlyU">
    <location>
        <begin position="1"/>
        <end position="108"/>
    </location>
</feature>
<feature type="domain" description="HTH arsR-type" evidence="1">
    <location>
        <begin position="13"/>
        <end position="107"/>
    </location>
</feature>
<feature type="DNA-binding region" description="H-T-H motif" evidence="1">
    <location>
        <begin position="47"/>
        <end position="66"/>
    </location>
</feature>
<feature type="helix" evidence="3">
    <location>
        <begin position="12"/>
        <end position="28"/>
    </location>
</feature>
<feature type="helix" evidence="3">
    <location>
        <begin position="31"/>
        <end position="40"/>
    </location>
</feature>
<feature type="helix" evidence="3">
    <location>
        <begin position="47"/>
        <end position="54"/>
    </location>
</feature>
<feature type="helix" evidence="3">
    <location>
        <begin position="58"/>
        <end position="70"/>
    </location>
</feature>
<feature type="strand" evidence="3">
    <location>
        <begin position="73"/>
        <end position="79"/>
    </location>
</feature>
<feature type="strand" evidence="3">
    <location>
        <begin position="82"/>
        <end position="87"/>
    </location>
</feature>
<feature type="helix" evidence="3">
    <location>
        <begin position="90"/>
        <end position="103"/>
    </location>
</feature>
<evidence type="ECO:0000255" key="1">
    <source>
        <dbReference type="PROSITE-ProRule" id="PRU00340"/>
    </source>
</evidence>
<evidence type="ECO:0000305" key="2"/>
<evidence type="ECO:0007829" key="3">
    <source>
        <dbReference type="PDB" id="4K2E"/>
    </source>
</evidence>
<reference key="1">
    <citation type="journal article" date="1993" name="Mol. Microbiol.">
        <title>The transcriptional activator HlyU of Vibrio cholerae: nucleotide sequence and role in virulence gene expression.</title>
        <authorList>
            <person name="Williams S.G."/>
            <person name="Attridge S.R."/>
            <person name="Manning P.A."/>
        </authorList>
    </citation>
    <scope>NUCLEOTIDE SEQUENCE [GENOMIC DNA]</scope>
    <source>
        <strain>Classical Inaba Z17561 / Serotype O1</strain>
    </source>
</reference>
<reference key="2">
    <citation type="journal article" date="1998" name="J. Bacteriol.">
        <title>A functional homolog of Escherichia coli NhaR in Vibrio cholerae.</title>
        <authorList>
            <person name="Williams S.G."/>
            <person name="Carmel-Harel O."/>
            <person name="Manning P.A."/>
        </authorList>
    </citation>
    <scope>NUCLEOTIDE SEQUENCE [GENOMIC DNA]</scope>
    <source>
        <strain>El Tor O17 / Serotype O1</strain>
    </source>
</reference>
<reference key="3">
    <citation type="journal article" date="2000" name="Nature">
        <title>DNA sequence of both chromosomes of the cholera pathogen Vibrio cholerae.</title>
        <authorList>
            <person name="Heidelberg J.F."/>
            <person name="Eisen J.A."/>
            <person name="Nelson W.C."/>
            <person name="Clayton R.A."/>
            <person name="Gwinn M.L."/>
            <person name="Dodson R.J."/>
            <person name="Haft D.H."/>
            <person name="Hickey E.K."/>
            <person name="Peterson J.D."/>
            <person name="Umayam L.A."/>
            <person name="Gill S.R."/>
            <person name="Nelson K.E."/>
            <person name="Read T.D."/>
            <person name="Tettelin H."/>
            <person name="Richardson D.L."/>
            <person name="Ermolaeva M.D."/>
            <person name="Vamathevan J.J."/>
            <person name="Bass S."/>
            <person name="Qin H."/>
            <person name="Dragoi I."/>
            <person name="Sellers P."/>
            <person name="McDonald L.A."/>
            <person name="Utterback T.R."/>
            <person name="Fleischmann R.D."/>
            <person name="Nierman W.C."/>
            <person name="White O."/>
            <person name="Salzberg S.L."/>
            <person name="Smith H.O."/>
            <person name="Colwell R.R."/>
            <person name="Mekalanos J.J."/>
            <person name="Venter J.C."/>
            <person name="Fraser C.M."/>
        </authorList>
    </citation>
    <scope>NUCLEOTIDE SEQUENCE [LARGE SCALE GENOMIC DNA]</scope>
    <source>
        <strain>ATCC 39315 / El Tor Inaba N16961</strain>
    </source>
</reference>
<protein>
    <recommendedName>
        <fullName>Transcriptional activator HlyU</fullName>
    </recommendedName>
</protein>
<keyword id="KW-0002">3D-structure</keyword>
<keyword id="KW-0010">Activator</keyword>
<keyword id="KW-0238">DNA-binding</keyword>
<keyword id="KW-1185">Reference proteome</keyword>
<keyword id="KW-0804">Transcription</keyword>
<keyword id="KW-0805">Transcription regulation</keyword>
<keyword id="KW-0843">Virulence</keyword>
<name>HLYU_VIBCH</name>
<organism>
    <name type="scientific">Vibrio cholerae serotype O1 (strain ATCC 39315 / El Tor Inaba N16961)</name>
    <dbReference type="NCBI Taxonomy" id="243277"/>
    <lineage>
        <taxon>Bacteria</taxon>
        <taxon>Pseudomonadati</taxon>
        <taxon>Pseudomonadota</taxon>
        <taxon>Gammaproteobacteria</taxon>
        <taxon>Vibrionales</taxon>
        <taxon>Vibrionaceae</taxon>
        <taxon>Vibrio</taxon>
    </lineage>
</organism>
<dbReference type="EMBL" id="X66866">
    <property type="protein sequence ID" value="CAA47336.1"/>
    <property type="molecule type" value="Genomic_DNA"/>
</dbReference>
<dbReference type="EMBL" id="AJ002395">
    <property type="protein sequence ID" value="CAA05372.1"/>
    <property type="molecule type" value="Genomic_DNA"/>
</dbReference>
<dbReference type="EMBL" id="AE003852">
    <property type="protein sequence ID" value="AAF93843.1"/>
    <property type="molecule type" value="Genomic_DNA"/>
</dbReference>
<dbReference type="PIR" id="S37313">
    <property type="entry name" value="S37313"/>
</dbReference>
<dbReference type="RefSeq" id="NP_230327.1">
    <property type="nucleotide sequence ID" value="NC_002505.1"/>
</dbReference>
<dbReference type="PDB" id="4K2E">
    <property type="method" value="X-ray"/>
    <property type="resolution" value="1.80 A"/>
    <property type="chains" value="A/B/C/D=1-108"/>
</dbReference>
<dbReference type="PDB" id="4OOI">
    <property type="method" value="X-ray"/>
    <property type="resolution" value="2.20 A"/>
    <property type="chains" value="A/B/C/D=1-108"/>
</dbReference>
<dbReference type="PDBsum" id="4K2E"/>
<dbReference type="PDBsum" id="4OOI"/>
<dbReference type="SMR" id="P52695"/>
<dbReference type="STRING" id="243277.VC_0678"/>
<dbReference type="DNASU" id="2615467"/>
<dbReference type="EnsemblBacteria" id="AAF93843">
    <property type="protein sequence ID" value="AAF93843"/>
    <property type="gene ID" value="VC_0678"/>
</dbReference>
<dbReference type="KEGG" id="vch:VC_0678"/>
<dbReference type="PATRIC" id="fig|243277.26.peg.650"/>
<dbReference type="eggNOG" id="COG0640">
    <property type="taxonomic scope" value="Bacteria"/>
</dbReference>
<dbReference type="HOGENOM" id="CLU_097806_6_4_6"/>
<dbReference type="EvolutionaryTrace" id="P52695"/>
<dbReference type="Proteomes" id="UP000000584">
    <property type="component" value="Chromosome 1"/>
</dbReference>
<dbReference type="GO" id="GO:0003677">
    <property type="term" value="F:DNA binding"/>
    <property type="evidence" value="ECO:0007669"/>
    <property type="project" value="UniProtKB-KW"/>
</dbReference>
<dbReference type="GO" id="GO:0003700">
    <property type="term" value="F:DNA-binding transcription factor activity"/>
    <property type="evidence" value="ECO:0007669"/>
    <property type="project" value="InterPro"/>
</dbReference>
<dbReference type="GO" id="GO:0006355">
    <property type="term" value="P:regulation of DNA-templated transcription"/>
    <property type="evidence" value="ECO:0000318"/>
    <property type="project" value="GO_Central"/>
</dbReference>
<dbReference type="CDD" id="cd00090">
    <property type="entry name" value="HTH_ARSR"/>
    <property type="match status" value="1"/>
</dbReference>
<dbReference type="DisProt" id="DP02188"/>
<dbReference type="FunFam" id="1.10.10.10:FF:000403">
    <property type="entry name" value="ArsR family transcriptional regulator"/>
    <property type="match status" value="1"/>
</dbReference>
<dbReference type="Gene3D" id="1.10.10.10">
    <property type="entry name" value="Winged helix-like DNA-binding domain superfamily/Winged helix DNA-binding domain"/>
    <property type="match status" value="1"/>
</dbReference>
<dbReference type="InterPro" id="IPR011991">
    <property type="entry name" value="ArsR-like_HTH"/>
</dbReference>
<dbReference type="InterPro" id="IPR001845">
    <property type="entry name" value="HTH_ArsR_DNA-bd_dom"/>
</dbReference>
<dbReference type="InterPro" id="IPR051081">
    <property type="entry name" value="HTH_MetalResp_TranReg"/>
</dbReference>
<dbReference type="InterPro" id="IPR036388">
    <property type="entry name" value="WH-like_DNA-bd_sf"/>
</dbReference>
<dbReference type="InterPro" id="IPR036390">
    <property type="entry name" value="WH_DNA-bd_sf"/>
</dbReference>
<dbReference type="NCBIfam" id="NF033788">
    <property type="entry name" value="HTH_metalloreg"/>
    <property type="match status" value="1"/>
</dbReference>
<dbReference type="PANTHER" id="PTHR33154:SF28">
    <property type="entry name" value="HTH-TYPE TRANSCRIPTIONAL REGULATOR YGAV-RELATED"/>
    <property type="match status" value="1"/>
</dbReference>
<dbReference type="PANTHER" id="PTHR33154">
    <property type="entry name" value="TRANSCRIPTIONAL REGULATOR, ARSR FAMILY"/>
    <property type="match status" value="1"/>
</dbReference>
<dbReference type="Pfam" id="PF01022">
    <property type="entry name" value="HTH_5"/>
    <property type="match status" value="1"/>
</dbReference>
<dbReference type="PRINTS" id="PR00778">
    <property type="entry name" value="HTHARSR"/>
</dbReference>
<dbReference type="SMART" id="SM00418">
    <property type="entry name" value="HTH_ARSR"/>
    <property type="match status" value="1"/>
</dbReference>
<dbReference type="SUPFAM" id="SSF46785">
    <property type="entry name" value="Winged helix' DNA-binding domain"/>
    <property type="match status" value="1"/>
</dbReference>
<dbReference type="PROSITE" id="PS50987">
    <property type="entry name" value="HTH_ARSR_2"/>
    <property type="match status" value="1"/>
</dbReference>
<proteinExistence type="evidence at protein level"/>